<proteinExistence type="inferred from homology"/>
<accession>B2SG83</accession>
<organism>
    <name type="scientific">Francisella tularensis subsp. mediasiatica (strain FSC147)</name>
    <dbReference type="NCBI Taxonomy" id="441952"/>
    <lineage>
        <taxon>Bacteria</taxon>
        <taxon>Pseudomonadati</taxon>
        <taxon>Pseudomonadota</taxon>
        <taxon>Gammaproteobacteria</taxon>
        <taxon>Thiotrichales</taxon>
        <taxon>Francisellaceae</taxon>
        <taxon>Francisella</taxon>
    </lineage>
</organism>
<evidence type="ECO:0000255" key="1">
    <source>
        <dbReference type="HAMAP-Rule" id="MF_00170"/>
    </source>
</evidence>
<feature type="chain" id="PRO_1000097667" description="Ribose-5-phosphate isomerase A">
    <location>
        <begin position="1"/>
        <end position="224"/>
    </location>
</feature>
<feature type="active site" description="Proton acceptor" evidence="1">
    <location>
        <position position="109"/>
    </location>
</feature>
<feature type="binding site" evidence="1">
    <location>
        <begin position="34"/>
        <end position="37"/>
    </location>
    <ligand>
        <name>substrate</name>
    </ligand>
</feature>
<feature type="binding site" evidence="1">
    <location>
        <begin position="87"/>
        <end position="90"/>
    </location>
    <ligand>
        <name>substrate</name>
    </ligand>
</feature>
<feature type="binding site" evidence="1">
    <location>
        <begin position="100"/>
        <end position="103"/>
    </location>
    <ligand>
        <name>substrate</name>
    </ligand>
</feature>
<feature type="binding site" evidence="1">
    <location>
        <position position="127"/>
    </location>
    <ligand>
        <name>substrate</name>
    </ligand>
</feature>
<protein>
    <recommendedName>
        <fullName evidence="1">Ribose-5-phosphate isomerase A</fullName>
        <ecNumber evidence="1">5.3.1.6</ecNumber>
    </recommendedName>
    <alternativeName>
        <fullName evidence="1">Phosphoriboisomerase A</fullName>
        <shortName evidence="1">PRI</shortName>
    </alternativeName>
</protein>
<comment type="function">
    <text evidence="1">Catalyzes the reversible conversion of ribose-5-phosphate to ribulose 5-phosphate.</text>
</comment>
<comment type="catalytic activity">
    <reaction evidence="1">
        <text>aldehydo-D-ribose 5-phosphate = D-ribulose 5-phosphate</text>
        <dbReference type="Rhea" id="RHEA:14657"/>
        <dbReference type="ChEBI" id="CHEBI:58121"/>
        <dbReference type="ChEBI" id="CHEBI:58273"/>
        <dbReference type="EC" id="5.3.1.6"/>
    </reaction>
</comment>
<comment type="pathway">
    <text evidence="1">Carbohydrate degradation; pentose phosphate pathway; D-ribose 5-phosphate from D-ribulose 5-phosphate (non-oxidative stage): step 1/1.</text>
</comment>
<comment type="subunit">
    <text evidence="1">Homodimer.</text>
</comment>
<comment type="similarity">
    <text evidence="1">Belongs to the ribose 5-phosphate isomerase family.</text>
</comment>
<reference key="1">
    <citation type="journal article" date="2009" name="PLoS Pathog.">
        <title>Molecular evolutionary consequences of niche restriction in Francisella tularensis, a facultative intracellular pathogen.</title>
        <authorList>
            <person name="Larsson P."/>
            <person name="Elfsmark D."/>
            <person name="Svensson K."/>
            <person name="Wikstroem P."/>
            <person name="Forsman M."/>
            <person name="Brettin T."/>
            <person name="Keim P."/>
            <person name="Johansson A."/>
        </authorList>
    </citation>
    <scope>NUCLEOTIDE SEQUENCE [LARGE SCALE GENOMIC DNA]</scope>
    <source>
        <strain>FSC147</strain>
    </source>
</reference>
<name>RPIA_FRATM</name>
<keyword id="KW-0413">Isomerase</keyword>
<sequence length="224" mass="24466">MFFNKKNNQDELKKLAATEAAKSITTEITLGVGTGSTVGFLIEELVNYRDKIKTVVSSSEDSTRKLKALGFDVVDLNYAGEIDLYIDGADECNNHKELIKGGGAALTREKICVAAAKKFICIIDESKKVNTLGNFPLPIEVIPMARSYIARQIVKLGGQPVYREQTITDNGNVILDVYNLKIDNPLKLETELNQITGVVTNGIFALKPADTVIMATKDSNIVVL</sequence>
<gene>
    <name evidence="1" type="primary">rpiA</name>
    <name type="ordered locus">FTM_0781</name>
</gene>
<dbReference type="EC" id="5.3.1.6" evidence="1"/>
<dbReference type="EMBL" id="CP000915">
    <property type="protein sequence ID" value="ACD30745.1"/>
    <property type="molecule type" value="Genomic_DNA"/>
</dbReference>
<dbReference type="SMR" id="B2SG83"/>
<dbReference type="KEGG" id="ftm:FTM_0781"/>
<dbReference type="HOGENOM" id="CLU_056590_1_1_6"/>
<dbReference type="UniPathway" id="UPA00115">
    <property type="reaction ID" value="UER00412"/>
</dbReference>
<dbReference type="GO" id="GO:0005829">
    <property type="term" value="C:cytosol"/>
    <property type="evidence" value="ECO:0007669"/>
    <property type="project" value="TreeGrafter"/>
</dbReference>
<dbReference type="GO" id="GO:0004751">
    <property type="term" value="F:ribose-5-phosphate isomerase activity"/>
    <property type="evidence" value="ECO:0007669"/>
    <property type="project" value="UniProtKB-UniRule"/>
</dbReference>
<dbReference type="GO" id="GO:0006014">
    <property type="term" value="P:D-ribose metabolic process"/>
    <property type="evidence" value="ECO:0007669"/>
    <property type="project" value="TreeGrafter"/>
</dbReference>
<dbReference type="GO" id="GO:0009052">
    <property type="term" value="P:pentose-phosphate shunt, non-oxidative branch"/>
    <property type="evidence" value="ECO:0007669"/>
    <property type="project" value="UniProtKB-UniRule"/>
</dbReference>
<dbReference type="CDD" id="cd01398">
    <property type="entry name" value="RPI_A"/>
    <property type="match status" value="1"/>
</dbReference>
<dbReference type="FunFam" id="3.30.70.260:FF:000004">
    <property type="entry name" value="Ribose-5-phosphate isomerase A"/>
    <property type="match status" value="1"/>
</dbReference>
<dbReference type="FunFam" id="3.40.50.1360:FF:000001">
    <property type="entry name" value="Ribose-5-phosphate isomerase A"/>
    <property type="match status" value="1"/>
</dbReference>
<dbReference type="Gene3D" id="3.30.70.260">
    <property type="match status" value="1"/>
</dbReference>
<dbReference type="Gene3D" id="3.40.50.1360">
    <property type="match status" value="1"/>
</dbReference>
<dbReference type="HAMAP" id="MF_00170">
    <property type="entry name" value="Rib_5P_isom_A"/>
    <property type="match status" value="1"/>
</dbReference>
<dbReference type="InterPro" id="IPR037171">
    <property type="entry name" value="NagB/RpiA_transferase-like"/>
</dbReference>
<dbReference type="InterPro" id="IPR020672">
    <property type="entry name" value="Ribose5P_isomerase_typA_subgr"/>
</dbReference>
<dbReference type="InterPro" id="IPR004788">
    <property type="entry name" value="Ribose5P_isomerase_type_A"/>
</dbReference>
<dbReference type="NCBIfam" id="NF001924">
    <property type="entry name" value="PRK00702.1"/>
    <property type="match status" value="1"/>
</dbReference>
<dbReference type="NCBIfam" id="TIGR00021">
    <property type="entry name" value="rpiA"/>
    <property type="match status" value="1"/>
</dbReference>
<dbReference type="PANTHER" id="PTHR11934">
    <property type="entry name" value="RIBOSE-5-PHOSPHATE ISOMERASE"/>
    <property type="match status" value="1"/>
</dbReference>
<dbReference type="PANTHER" id="PTHR11934:SF0">
    <property type="entry name" value="RIBOSE-5-PHOSPHATE ISOMERASE"/>
    <property type="match status" value="1"/>
</dbReference>
<dbReference type="Pfam" id="PF06026">
    <property type="entry name" value="Rib_5-P_isom_A"/>
    <property type="match status" value="1"/>
</dbReference>
<dbReference type="SUPFAM" id="SSF75445">
    <property type="entry name" value="D-ribose-5-phosphate isomerase (RpiA), lid domain"/>
    <property type="match status" value="1"/>
</dbReference>
<dbReference type="SUPFAM" id="SSF100950">
    <property type="entry name" value="NagB/RpiA/CoA transferase-like"/>
    <property type="match status" value="1"/>
</dbReference>